<gene>
    <name type="primary">spi</name>
</gene>
<name>SPIR_SPIME</name>
<dbReference type="EMBL" id="M59366">
    <property type="protein sequence ID" value="AAA26588.1"/>
    <property type="molecule type" value="Genomic_DNA"/>
</dbReference>
<dbReference type="PIR" id="A36149">
    <property type="entry name" value="A36149"/>
</dbReference>
<dbReference type="GO" id="GO:0005886">
    <property type="term" value="C:plasma membrane"/>
    <property type="evidence" value="ECO:0007669"/>
    <property type="project" value="UniProtKB-SubCell"/>
</dbReference>
<dbReference type="InterPro" id="IPR054816">
    <property type="entry name" value="Lipoprotein_mollicutes-type_CS"/>
</dbReference>
<dbReference type="InterPro" id="IPR007880">
    <property type="entry name" value="Spiralin"/>
</dbReference>
<dbReference type="NCBIfam" id="NF038029">
    <property type="entry name" value="LP_plasma"/>
    <property type="match status" value="1"/>
</dbReference>
<dbReference type="NCBIfam" id="NF038030">
    <property type="entry name" value="spiralin_LP"/>
    <property type="match status" value="1"/>
</dbReference>
<dbReference type="NCBIfam" id="NF038028">
    <property type="entry name" value="spiralin_repeat"/>
    <property type="match status" value="1"/>
</dbReference>
<dbReference type="NCBIfam" id="NF045726">
    <property type="entry name" value="XXplasma_LP"/>
    <property type="match status" value="1"/>
</dbReference>
<dbReference type="Pfam" id="PF05215">
    <property type="entry name" value="Spiralin"/>
    <property type="match status" value="2"/>
</dbReference>
<dbReference type="PROSITE" id="PS51257">
    <property type="entry name" value="PROKAR_LIPOPROTEIN"/>
    <property type="match status" value="1"/>
</dbReference>
<protein>
    <recommendedName>
        <fullName>Spiralin</fullName>
    </recommendedName>
</protein>
<proteinExistence type="evidence at protein level"/>
<accession>P21625</accession>
<keyword id="KW-1003">Cell membrane</keyword>
<keyword id="KW-0449">Lipoprotein</keyword>
<keyword id="KW-0472">Membrane</keyword>
<keyword id="KW-0564">Palmitate</keyword>
<keyword id="KW-0732">Signal</keyword>
<feature type="signal peptide">
    <location>
        <begin position="1"/>
        <end position="23"/>
    </location>
</feature>
<feature type="chain" id="PRO_0000022397" description="Spiralin">
    <location>
        <begin position="24"/>
        <end position="242"/>
    </location>
</feature>
<feature type="lipid moiety-binding region" description="N-palmitoyl cysteine" evidence="1 2">
    <location>
        <position position="24"/>
    </location>
</feature>
<feature type="lipid moiety-binding region" description="S-diacylglycerol cysteine" evidence="1 2">
    <location>
        <position position="24"/>
    </location>
</feature>
<organism>
    <name type="scientific">Spiroplasma melliferum</name>
    <dbReference type="NCBI Taxonomy" id="2134"/>
    <lineage>
        <taxon>Bacteria</taxon>
        <taxon>Bacillati</taxon>
        <taxon>Mycoplasmatota</taxon>
        <taxon>Mollicutes</taxon>
        <taxon>Entomoplasmatales</taxon>
        <taxon>Spiroplasmataceae</taxon>
        <taxon>Spiroplasma</taxon>
    </lineage>
</organism>
<evidence type="ECO:0000255" key="1">
    <source>
        <dbReference type="PROSITE-ProRule" id="PRU00303"/>
    </source>
</evidence>
<evidence type="ECO:0000269" key="2">
    <source>
    </source>
</evidence>
<evidence type="ECO:0000305" key="3"/>
<comment type="function">
    <text>Major membrane protein of spiroplasma.</text>
</comment>
<comment type="subunit">
    <text>Seems to occur as dimer, tetramers, and large oligomers of identical chains.</text>
</comment>
<comment type="subcellular location">
    <subcellularLocation>
        <location>Cell membrane</location>
        <topology>Lipid-anchor</topology>
    </subcellularLocation>
</comment>
<comment type="PTM">
    <text evidence="2">Palmitate and stearate are the major lipid components.</text>
</comment>
<comment type="similarity">
    <text evidence="3">Belongs to the spiralin family.</text>
</comment>
<reference key="1">
    <citation type="journal article" date="1990" name="J. Bacteriol.">
        <title>Spiralins of Spiroplasma citri and Spiroplasma melliferum: amino acid sequences and putative organization in the cell membrane.</title>
        <authorList>
            <person name="Chevalier C."/>
            <person name="Saillard C."/>
            <person name="Bove J.M."/>
        </authorList>
    </citation>
    <scope>NUCLEOTIDE SEQUENCE [GENOMIC DNA]</scope>
    <source>
        <strain>ATCC 33219 / BC3</strain>
    </source>
</reference>
<reference key="2">
    <citation type="journal article" date="2000" name="Arch. Microbiol.">
        <title>Chemical analysis of processing of spiralin, the major lipoprotein of Spiroplasma melliferum.</title>
        <authorList>
            <person name="Le Henaff M."/>
            <person name="Fontenelle C."/>
        </authorList>
    </citation>
    <scope>PROTEOLYTIC PROCESSING OF N-TERMINUS</scope>
    <scope>DIACYLGLYCEROL AT CYS-24</scope>
    <scope>PALMITOYLATION AT CYS-24</scope>
</reference>
<sequence length="242" mass="25441">MKKLLSILAVFGVSAVGTTSVVACNKTESNNLSRVKTIAAPATVAASTPKAVTKPEIKTALEANVLKAVQGVVKTATAADFQFEVYKNSKGTALETIDLEAGKVEVYLQITPAKDKTVVIGETRYIKVTLPKHGEVTKVDIKDVTVTEQTVGIKASTPKAVKKDELNAVNTYATLAKAVLDAIQNIAPNAGASDFEITNNGAEGDYEAAKEVEVTVKAKNDSANISGQFKFKAKVTATAPTE</sequence>